<dbReference type="EC" id="6.1.1.23" evidence="1"/>
<dbReference type="EMBL" id="AE017126">
    <property type="protein sequence ID" value="AAQ00896.1"/>
    <property type="molecule type" value="Genomic_DNA"/>
</dbReference>
<dbReference type="RefSeq" id="NP_876243.1">
    <property type="nucleotide sequence ID" value="NC_005042.1"/>
</dbReference>
<dbReference type="RefSeq" id="WP_011126001.1">
    <property type="nucleotide sequence ID" value="NC_005042.1"/>
</dbReference>
<dbReference type="SMR" id="Q7V9I1"/>
<dbReference type="STRING" id="167539.Pro_1852"/>
<dbReference type="EnsemblBacteria" id="AAQ00896">
    <property type="protein sequence ID" value="AAQ00896"/>
    <property type="gene ID" value="Pro_1852"/>
</dbReference>
<dbReference type="KEGG" id="pma:Pro_1852"/>
<dbReference type="PATRIC" id="fig|167539.5.peg.1954"/>
<dbReference type="eggNOG" id="COG0173">
    <property type="taxonomic scope" value="Bacteria"/>
</dbReference>
<dbReference type="HOGENOM" id="CLU_014330_3_2_3"/>
<dbReference type="OrthoDB" id="9802326at2"/>
<dbReference type="Proteomes" id="UP000001420">
    <property type="component" value="Chromosome"/>
</dbReference>
<dbReference type="GO" id="GO:0005737">
    <property type="term" value="C:cytoplasm"/>
    <property type="evidence" value="ECO:0007669"/>
    <property type="project" value="UniProtKB-SubCell"/>
</dbReference>
<dbReference type="GO" id="GO:0004815">
    <property type="term" value="F:aspartate-tRNA ligase activity"/>
    <property type="evidence" value="ECO:0007669"/>
    <property type="project" value="UniProtKB-UniRule"/>
</dbReference>
<dbReference type="GO" id="GO:0050560">
    <property type="term" value="F:aspartate-tRNA(Asn) ligase activity"/>
    <property type="evidence" value="ECO:0007669"/>
    <property type="project" value="UniProtKB-EC"/>
</dbReference>
<dbReference type="GO" id="GO:0005524">
    <property type="term" value="F:ATP binding"/>
    <property type="evidence" value="ECO:0007669"/>
    <property type="project" value="UniProtKB-UniRule"/>
</dbReference>
<dbReference type="GO" id="GO:0003676">
    <property type="term" value="F:nucleic acid binding"/>
    <property type="evidence" value="ECO:0007669"/>
    <property type="project" value="InterPro"/>
</dbReference>
<dbReference type="GO" id="GO:0006422">
    <property type="term" value="P:aspartyl-tRNA aminoacylation"/>
    <property type="evidence" value="ECO:0007669"/>
    <property type="project" value="UniProtKB-UniRule"/>
</dbReference>
<dbReference type="CDD" id="cd00777">
    <property type="entry name" value="AspRS_core"/>
    <property type="match status" value="1"/>
</dbReference>
<dbReference type="CDD" id="cd04317">
    <property type="entry name" value="EcAspRS_like_N"/>
    <property type="match status" value="1"/>
</dbReference>
<dbReference type="Gene3D" id="3.30.930.10">
    <property type="entry name" value="Bira Bifunctional Protein, Domain 2"/>
    <property type="match status" value="1"/>
</dbReference>
<dbReference type="Gene3D" id="3.30.1360.30">
    <property type="entry name" value="GAD-like domain"/>
    <property type="match status" value="1"/>
</dbReference>
<dbReference type="Gene3D" id="2.40.50.140">
    <property type="entry name" value="Nucleic acid-binding proteins"/>
    <property type="match status" value="1"/>
</dbReference>
<dbReference type="HAMAP" id="MF_00044">
    <property type="entry name" value="Asp_tRNA_synth_type1"/>
    <property type="match status" value="1"/>
</dbReference>
<dbReference type="InterPro" id="IPR004364">
    <property type="entry name" value="Aa-tRNA-synt_II"/>
</dbReference>
<dbReference type="InterPro" id="IPR006195">
    <property type="entry name" value="aa-tRNA-synth_II"/>
</dbReference>
<dbReference type="InterPro" id="IPR045864">
    <property type="entry name" value="aa-tRNA-synth_II/BPL/LPL"/>
</dbReference>
<dbReference type="InterPro" id="IPR004524">
    <property type="entry name" value="Asp-tRNA-ligase_1"/>
</dbReference>
<dbReference type="InterPro" id="IPR047089">
    <property type="entry name" value="Asp-tRNA-ligase_1_N"/>
</dbReference>
<dbReference type="InterPro" id="IPR002312">
    <property type="entry name" value="Asp/Asn-tRNA-synth_IIb"/>
</dbReference>
<dbReference type="InterPro" id="IPR047090">
    <property type="entry name" value="AspRS_core"/>
</dbReference>
<dbReference type="InterPro" id="IPR004115">
    <property type="entry name" value="GAD-like_sf"/>
</dbReference>
<dbReference type="InterPro" id="IPR029351">
    <property type="entry name" value="GAD_dom"/>
</dbReference>
<dbReference type="InterPro" id="IPR012340">
    <property type="entry name" value="NA-bd_OB-fold"/>
</dbReference>
<dbReference type="InterPro" id="IPR004365">
    <property type="entry name" value="NA-bd_OB_tRNA"/>
</dbReference>
<dbReference type="NCBIfam" id="TIGR00459">
    <property type="entry name" value="aspS_bact"/>
    <property type="match status" value="1"/>
</dbReference>
<dbReference type="NCBIfam" id="NF001750">
    <property type="entry name" value="PRK00476.1"/>
    <property type="match status" value="1"/>
</dbReference>
<dbReference type="PANTHER" id="PTHR22594:SF5">
    <property type="entry name" value="ASPARTATE--TRNA LIGASE, MITOCHONDRIAL"/>
    <property type="match status" value="1"/>
</dbReference>
<dbReference type="PANTHER" id="PTHR22594">
    <property type="entry name" value="ASPARTYL/LYSYL-TRNA SYNTHETASE"/>
    <property type="match status" value="1"/>
</dbReference>
<dbReference type="Pfam" id="PF02938">
    <property type="entry name" value="GAD"/>
    <property type="match status" value="1"/>
</dbReference>
<dbReference type="Pfam" id="PF00152">
    <property type="entry name" value="tRNA-synt_2"/>
    <property type="match status" value="1"/>
</dbReference>
<dbReference type="Pfam" id="PF01336">
    <property type="entry name" value="tRNA_anti-codon"/>
    <property type="match status" value="1"/>
</dbReference>
<dbReference type="PRINTS" id="PR01042">
    <property type="entry name" value="TRNASYNTHASP"/>
</dbReference>
<dbReference type="SUPFAM" id="SSF55681">
    <property type="entry name" value="Class II aaRS and biotin synthetases"/>
    <property type="match status" value="1"/>
</dbReference>
<dbReference type="SUPFAM" id="SSF55261">
    <property type="entry name" value="GAD domain-like"/>
    <property type="match status" value="1"/>
</dbReference>
<dbReference type="SUPFAM" id="SSF50249">
    <property type="entry name" value="Nucleic acid-binding proteins"/>
    <property type="match status" value="1"/>
</dbReference>
<dbReference type="PROSITE" id="PS50862">
    <property type="entry name" value="AA_TRNA_LIGASE_II"/>
    <property type="match status" value="1"/>
</dbReference>
<gene>
    <name evidence="1" type="primary">aspS</name>
    <name type="ordered locus">Pro_1852</name>
</gene>
<protein>
    <recommendedName>
        <fullName evidence="1">Aspartate--tRNA(Asp/Asn) ligase</fullName>
        <ecNumber evidence="1">6.1.1.23</ecNumber>
    </recommendedName>
    <alternativeName>
        <fullName evidence="1">Aspartyl-tRNA synthetase</fullName>
        <shortName evidence="1">AspRS</shortName>
    </alternativeName>
    <alternativeName>
        <fullName evidence="1">Non-discriminating aspartyl-tRNA synthetase</fullName>
        <shortName evidence="1">ND-AspRS</shortName>
    </alternativeName>
</protein>
<organism>
    <name type="scientific">Prochlorococcus marinus (strain SARG / CCMP1375 / SS120)</name>
    <dbReference type="NCBI Taxonomy" id="167539"/>
    <lineage>
        <taxon>Bacteria</taxon>
        <taxon>Bacillati</taxon>
        <taxon>Cyanobacteriota</taxon>
        <taxon>Cyanophyceae</taxon>
        <taxon>Synechococcales</taxon>
        <taxon>Prochlorococcaceae</taxon>
        <taxon>Prochlorococcus</taxon>
    </lineage>
</organism>
<comment type="function">
    <text evidence="1">Aspartyl-tRNA synthetase with relaxed tRNA specificity since it is able to aspartylate not only its cognate tRNA(Asp) but also tRNA(Asn). Reaction proceeds in two steps: L-aspartate is first activated by ATP to form Asp-AMP and then transferred to the acceptor end of tRNA(Asp/Asn).</text>
</comment>
<comment type="catalytic activity">
    <reaction evidence="1">
        <text>tRNA(Asx) + L-aspartate + ATP = L-aspartyl-tRNA(Asx) + AMP + diphosphate</text>
        <dbReference type="Rhea" id="RHEA:18349"/>
        <dbReference type="Rhea" id="RHEA-COMP:9710"/>
        <dbReference type="Rhea" id="RHEA-COMP:9711"/>
        <dbReference type="ChEBI" id="CHEBI:29991"/>
        <dbReference type="ChEBI" id="CHEBI:30616"/>
        <dbReference type="ChEBI" id="CHEBI:33019"/>
        <dbReference type="ChEBI" id="CHEBI:78442"/>
        <dbReference type="ChEBI" id="CHEBI:78516"/>
        <dbReference type="ChEBI" id="CHEBI:456215"/>
        <dbReference type="EC" id="6.1.1.23"/>
    </reaction>
</comment>
<comment type="subunit">
    <text evidence="1">Homodimer.</text>
</comment>
<comment type="subcellular location">
    <subcellularLocation>
        <location evidence="1">Cytoplasm</location>
    </subcellularLocation>
</comment>
<comment type="similarity">
    <text evidence="1">Belongs to the class-II aminoacyl-tRNA synthetase family. Type 1 subfamily.</text>
</comment>
<evidence type="ECO:0000255" key="1">
    <source>
        <dbReference type="HAMAP-Rule" id="MF_00044"/>
    </source>
</evidence>
<keyword id="KW-0030">Aminoacyl-tRNA synthetase</keyword>
<keyword id="KW-0067">ATP-binding</keyword>
<keyword id="KW-0963">Cytoplasm</keyword>
<keyword id="KW-0436">Ligase</keyword>
<keyword id="KW-0547">Nucleotide-binding</keyword>
<keyword id="KW-0648">Protein biosynthesis</keyword>
<keyword id="KW-1185">Reference proteome</keyword>
<reference key="1">
    <citation type="journal article" date="2003" name="Proc. Natl. Acad. Sci. U.S.A.">
        <title>Genome sequence of the cyanobacterium Prochlorococcus marinus SS120, a nearly minimal oxyphototrophic genome.</title>
        <authorList>
            <person name="Dufresne A."/>
            <person name="Salanoubat M."/>
            <person name="Partensky F."/>
            <person name="Artiguenave F."/>
            <person name="Axmann I.M."/>
            <person name="Barbe V."/>
            <person name="Duprat S."/>
            <person name="Galperin M.Y."/>
            <person name="Koonin E.V."/>
            <person name="Le Gall F."/>
            <person name="Makarova K.S."/>
            <person name="Ostrowski M."/>
            <person name="Oztas S."/>
            <person name="Robert C."/>
            <person name="Rogozin I.B."/>
            <person name="Scanlan D.J."/>
            <person name="Tandeau de Marsac N."/>
            <person name="Weissenbach J."/>
            <person name="Wincker P."/>
            <person name="Wolf Y.I."/>
            <person name="Hess W.R."/>
        </authorList>
    </citation>
    <scope>NUCLEOTIDE SEQUENCE [LARGE SCALE GENOMIC DNA]</scope>
    <source>
        <strain>SARG / CCMP1375 / SS120</strain>
    </source>
</reference>
<name>SYDND_PROMA</name>
<feature type="chain" id="PRO_0000110921" description="Aspartate--tRNA(Asp/Asn) ligase">
    <location>
        <begin position="1"/>
        <end position="605"/>
    </location>
</feature>
<feature type="region of interest" description="Aspartate" evidence="1">
    <location>
        <begin position="201"/>
        <end position="204"/>
    </location>
</feature>
<feature type="binding site" evidence="1">
    <location>
        <position position="177"/>
    </location>
    <ligand>
        <name>L-aspartate</name>
        <dbReference type="ChEBI" id="CHEBI:29991"/>
    </ligand>
</feature>
<feature type="binding site" evidence="1">
    <location>
        <begin position="223"/>
        <end position="225"/>
    </location>
    <ligand>
        <name>ATP</name>
        <dbReference type="ChEBI" id="CHEBI:30616"/>
    </ligand>
</feature>
<feature type="binding site" evidence="1">
    <location>
        <position position="223"/>
    </location>
    <ligand>
        <name>L-aspartate</name>
        <dbReference type="ChEBI" id="CHEBI:29991"/>
    </ligand>
</feature>
<feature type="binding site" evidence="1">
    <location>
        <position position="232"/>
    </location>
    <ligand>
        <name>ATP</name>
        <dbReference type="ChEBI" id="CHEBI:30616"/>
    </ligand>
</feature>
<feature type="binding site" evidence="1">
    <location>
        <position position="461"/>
    </location>
    <ligand>
        <name>L-aspartate</name>
        <dbReference type="ChEBI" id="CHEBI:29991"/>
    </ligand>
</feature>
<feature type="binding site" evidence="1">
    <location>
        <position position="498"/>
    </location>
    <ligand>
        <name>ATP</name>
        <dbReference type="ChEBI" id="CHEBI:30616"/>
    </ligand>
</feature>
<feature type="binding site" evidence="1">
    <location>
        <position position="505"/>
    </location>
    <ligand>
        <name>L-aspartate</name>
        <dbReference type="ChEBI" id="CHEBI:29991"/>
    </ligand>
</feature>
<feature type="binding site" evidence="1">
    <location>
        <begin position="550"/>
        <end position="553"/>
    </location>
    <ligand>
        <name>ATP</name>
        <dbReference type="ChEBI" id="CHEBI:30616"/>
    </ligand>
</feature>
<feature type="site" description="Important for tRNA non-discrimination" evidence="1">
    <location>
        <position position="30"/>
    </location>
</feature>
<proteinExistence type="inferred from homology"/>
<accession>Q7V9I1</accession>
<sequence length="605" mass="68431">MRSNYCGELRKKHINSNVQLCGWVDRRRDHGGVIFIDLRDRTGTIQITIDPDQGSELFTVAENLRNETVVQISGTIRARPSESCNQKLKTGEIEVLANHLEVLNQIQGNLPFSISVHDDEPIKEELRLRHRYLDLRKDRMTKNLRLRHEVLKTARNFLEQENFLEVETPILTRSTPEGARDYLVPSRVCEGDWFALPQSPQLFKQLLMVGGIERYYQIARCFRDEDLRSDRQPEFTQLDIEMSFMSQEEILGLTEKLISSIWKSVKGVDLVHPFPRLTWQESMDRFGTDRPDTRYGMELKNVSQILKGIGFKVFSGAIDAGGSVKCITITGGNQLISNVRIKPGGDIFSEAEKAGAKGLAFIRVRGNGEIDTIGAIKDNLNIAQKEELLKQTNANEGDLILFAAGDTTTVNKTLARLRQFLAKDLDLIPFKLNNEQWNFLWVVDFPMFEFNSDENRLEALHHPFCAPNQSDLGQRRLWETNLPTARAQAYDLVLNGLELGGGSLRIHNPDLQLTVLKTIGLPLQEAKKEFGFLLEALEMGAPPHGGLAFGLDRIVMLLAGEESIRDTIAFPKTQQAKCLLTEAPAEVSKKQLKELHITSTFIKNE</sequence>